<evidence type="ECO:0000250" key="1">
    <source>
        <dbReference type="UniProtKB" id="Q66GI4"/>
    </source>
</evidence>
<evidence type="ECO:0000256" key="2">
    <source>
        <dbReference type="SAM" id="MobiDB-lite"/>
    </source>
</evidence>
<evidence type="ECO:0000269" key="3">
    <source>
    </source>
</evidence>
<evidence type="ECO:0000269" key="4">
    <source>
    </source>
</evidence>
<evidence type="ECO:0000305" key="5"/>
<gene>
    <name type="primary">PRORP3</name>
    <name type="ordered locus">At4g21900</name>
    <name type="ORF">T8O5.110</name>
</gene>
<reference key="1">
    <citation type="journal article" date="1999" name="Nature">
        <title>Sequence and analysis of chromosome 4 of the plant Arabidopsis thaliana.</title>
        <authorList>
            <person name="Mayer K.F.X."/>
            <person name="Schueller C."/>
            <person name="Wambutt R."/>
            <person name="Murphy G."/>
            <person name="Volckaert G."/>
            <person name="Pohl T."/>
            <person name="Duesterhoeft A."/>
            <person name="Stiekema W."/>
            <person name="Entian K.-D."/>
            <person name="Terryn N."/>
            <person name="Harris B."/>
            <person name="Ansorge W."/>
            <person name="Brandt P."/>
            <person name="Grivell L.A."/>
            <person name="Rieger M."/>
            <person name="Weichselgartner M."/>
            <person name="de Simone V."/>
            <person name="Obermaier B."/>
            <person name="Mache R."/>
            <person name="Mueller M."/>
            <person name="Kreis M."/>
            <person name="Delseny M."/>
            <person name="Puigdomenech P."/>
            <person name="Watson M."/>
            <person name="Schmidtheini T."/>
            <person name="Reichert B."/>
            <person name="Portetelle D."/>
            <person name="Perez-Alonso M."/>
            <person name="Boutry M."/>
            <person name="Bancroft I."/>
            <person name="Vos P."/>
            <person name="Hoheisel J."/>
            <person name="Zimmermann W."/>
            <person name="Wedler H."/>
            <person name="Ridley P."/>
            <person name="Langham S.-A."/>
            <person name="McCullagh B."/>
            <person name="Bilham L."/>
            <person name="Robben J."/>
            <person name="van der Schueren J."/>
            <person name="Grymonprez B."/>
            <person name="Chuang Y.-J."/>
            <person name="Vandenbussche F."/>
            <person name="Braeken M."/>
            <person name="Weltjens I."/>
            <person name="Voet M."/>
            <person name="Bastiaens I."/>
            <person name="Aert R."/>
            <person name="Defoor E."/>
            <person name="Weitzenegger T."/>
            <person name="Bothe G."/>
            <person name="Ramsperger U."/>
            <person name="Hilbert H."/>
            <person name="Braun M."/>
            <person name="Holzer E."/>
            <person name="Brandt A."/>
            <person name="Peters S."/>
            <person name="van Staveren M."/>
            <person name="Dirkse W."/>
            <person name="Mooijman P."/>
            <person name="Klein Lankhorst R."/>
            <person name="Rose M."/>
            <person name="Hauf J."/>
            <person name="Koetter P."/>
            <person name="Berneiser S."/>
            <person name="Hempel S."/>
            <person name="Feldpausch M."/>
            <person name="Lamberth S."/>
            <person name="Van den Daele H."/>
            <person name="De Keyser A."/>
            <person name="Buysshaert C."/>
            <person name="Gielen J."/>
            <person name="Villarroel R."/>
            <person name="De Clercq R."/>
            <person name="van Montagu M."/>
            <person name="Rogers J."/>
            <person name="Cronin A."/>
            <person name="Quail M.A."/>
            <person name="Bray-Allen S."/>
            <person name="Clark L."/>
            <person name="Doggett J."/>
            <person name="Hall S."/>
            <person name="Kay M."/>
            <person name="Lennard N."/>
            <person name="McLay K."/>
            <person name="Mayes R."/>
            <person name="Pettett A."/>
            <person name="Rajandream M.A."/>
            <person name="Lyne M."/>
            <person name="Benes V."/>
            <person name="Rechmann S."/>
            <person name="Borkova D."/>
            <person name="Bloecker H."/>
            <person name="Scharfe M."/>
            <person name="Grimm M."/>
            <person name="Loehnert T.-H."/>
            <person name="Dose S."/>
            <person name="de Haan M."/>
            <person name="Maarse A.C."/>
            <person name="Schaefer M."/>
            <person name="Mueller-Auer S."/>
            <person name="Gabel C."/>
            <person name="Fuchs M."/>
            <person name="Fartmann B."/>
            <person name="Granderath K."/>
            <person name="Dauner D."/>
            <person name="Herzl A."/>
            <person name="Neumann S."/>
            <person name="Argiriou A."/>
            <person name="Vitale D."/>
            <person name="Liguori R."/>
            <person name="Piravandi E."/>
            <person name="Massenet O."/>
            <person name="Quigley F."/>
            <person name="Clabauld G."/>
            <person name="Muendlein A."/>
            <person name="Felber R."/>
            <person name="Schnabl S."/>
            <person name="Hiller R."/>
            <person name="Schmidt W."/>
            <person name="Lecharny A."/>
            <person name="Aubourg S."/>
            <person name="Chefdor F."/>
            <person name="Cooke R."/>
            <person name="Berger C."/>
            <person name="Monfort A."/>
            <person name="Casacuberta E."/>
            <person name="Gibbons T."/>
            <person name="Weber N."/>
            <person name="Vandenbol M."/>
            <person name="Bargues M."/>
            <person name="Terol J."/>
            <person name="Torres A."/>
            <person name="Perez-Perez A."/>
            <person name="Purnelle B."/>
            <person name="Bent E."/>
            <person name="Johnson S."/>
            <person name="Tacon D."/>
            <person name="Jesse T."/>
            <person name="Heijnen L."/>
            <person name="Schwarz S."/>
            <person name="Scholler P."/>
            <person name="Heber S."/>
            <person name="Francs P."/>
            <person name="Bielke C."/>
            <person name="Frishman D."/>
            <person name="Haase D."/>
            <person name="Lemcke K."/>
            <person name="Mewes H.-W."/>
            <person name="Stocker S."/>
            <person name="Zaccaria P."/>
            <person name="Bevan M."/>
            <person name="Wilson R.K."/>
            <person name="de la Bastide M."/>
            <person name="Habermann K."/>
            <person name="Parnell L."/>
            <person name="Dedhia N."/>
            <person name="Gnoj L."/>
            <person name="Schutz K."/>
            <person name="Huang E."/>
            <person name="Spiegel L."/>
            <person name="Sekhon M."/>
            <person name="Murray J."/>
            <person name="Sheet P."/>
            <person name="Cordes M."/>
            <person name="Abu-Threideh J."/>
            <person name="Stoneking T."/>
            <person name="Kalicki J."/>
            <person name="Graves T."/>
            <person name="Harmon G."/>
            <person name="Edwards J."/>
            <person name="Latreille P."/>
            <person name="Courtney L."/>
            <person name="Cloud J."/>
            <person name="Abbott A."/>
            <person name="Scott K."/>
            <person name="Johnson D."/>
            <person name="Minx P."/>
            <person name="Bentley D."/>
            <person name="Fulton B."/>
            <person name="Miller N."/>
            <person name="Greco T."/>
            <person name="Kemp K."/>
            <person name="Kramer J."/>
            <person name="Fulton L."/>
            <person name="Mardis E."/>
            <person name="Dante M."/>
            <person name="Pepin K."/>
            <person name="Hillier L.W."/>
            <person name="Nelson J."/>
            <person name="Spieth J."/>
            <person name="Ryan E."/>
            <person name="Andrews S."/>
            <person name="Geisel C."/>
            <person name="Layman D."/>
            <person name="Du H."/>
            <person name="Ali J."/>
            <person name="Berghoff A."/>
            <person name="Jones K."/>
            <person name="Drone K."/>
            <person name="Cotton M."/>
            <person name="Joshu C."/>
            <person name="Antonoiu B."/>
            <person name="Zidanic M."/>
            <person name="Strong C."/>
            <person name="Sun H."/>
            <person name="Lamar B."/>
            <person name="Yordan C."/>
            <person name="Ma P."/>
            <person name="Zhong J."/>
            <person name="Preston R."/>
            <person name="Vil D."/>
            <person name="Shekher M."/>
            <person name="Matero A."/>
            <person name="Shah R."/>
            <person name="Swaby I.K."/>
            <person name="O'Shaughnessy A."/>
            <person name="Rodriguez M."/>
            <person name="Hoffman J."/>
            <person name="Till S."/>
            <person name="Granat S."/>
            <person name="Shohdy N."/>
            <person name="Hasegawa A."/>
            <person name="Hameed A."/>
            <person name="Lodhi M."/>
            <person name="Johnson A."/>
            <person name="Chen E."/>
            <person name="Marra M.A."/>
            <person name="Martienssen R."/>
            <person name="McCombie W.R."/>
        </authorList>
    </citation>
    <scope>NUCLEOTIDE SEQUENCE [LARGE SCALE GENOMIC DNA]</scope>
    <source>
        <strain>cv. Columbia</strain>
    </source>
</reference>
<reference key="2">
    <citation type="journal article" date="2017" name="Plant J.">
        <title>Araport11: a complete reannotation of the Arabidopsis thaliana reference genome.</title>
        <authorList>
            <person name="Cheng C.Y."/>
            <person name="Krishnakumar V."/>
            <person name="Chan A.P."/>
            <person name="Thibaud-Nissen F."/>
            <person name="Schobel S."/>
            <person name="Town C.D."/>
        </authorList>
    </citation>
    <scope>GENOME REANNOTATION</scope>
    <source>
        <strain>cv. Columbia</strain>
    </source>
</reference>
<reference key="3">
    <citation type="submission" date="2006-07" db="EMBL/GenBank/DDBJ databases">
        <title>Large-scale analysis of RIKEN Arabidopsis full-length (RAFL) cDNAs.</title>
        <authorList>
            <person name="Totoki Y."/>
            <person name="Seki M."/>
            <person name="Ishida J."/>
            <person name="Nakajima M."/>
            <person name="Enju A."/>
            <person name="Morosawa T."/>
            <person name="Kamiya A."/>
            <person name="Narusaka M."/>
            <person name="Shin-i T."/>
            <person name="Nakagawa M."/>
            <person name="Sakamoto N."/>
            <person name="Oishi K."/>
            <person name="Kohara Y."/>
            <person name="Kobayashi M."/>
            <person name="Toyoda A."/>
            <person name="Sakaki Y."/>
            <person name="Sakurai T."/>
            <person name="Iida K."/>
            <person name="Akiyama K."/>
            <person name="Satou M."/>
            <person name="Toyoda T."/>
            <person name="Konagaya A."/>
            <person name="Carninci P."/>
            <person name="Kawai J."/>
            <person name="Hayashizaki Y."/>
            <person name="Shinozaki K."/>
        </authorList>
    </citation>
    <scope>NUCLEOTIDE SEQUENCE [LARGE SCALE MRNA]</scope>
</reference>
<reference key="4">
    <citation type="journal article" date="2010" name="Nat. Struct. Mol. Biol.">
        <title>A single Arabidopsis organellar protein has RNase P activity.</title>
        <authorList>
            <person name="Gobert A."/>
            <person name="Gutmann B."/>
            <person name="Taschner A."/>
            <person name="Goessringer M."/>
            <person name="Holzmann J."/>
            <person name="Hartmann R.K."/>
            <person name="Rossmanith W."/>
            <person name="Giege P."/>
        </authorList>
    </citation>
    <scope>IDENTIFICATION</scope>
    <scope>SUBCELLULAR LOCATION</scope>
</reference>
<reference key="5">
    <citation type="journal article" date="2012" name="Genes Dev.">
        <title>PRORP proteins support RNase P activity in both organelles and the nucleus in Arabidopsis.</title>
        <authorList>
            <person name="Gutmann B."/>
            <person name="Gobert A."/>
            <person name="Giege P."/>
        </authorList>
    </citation>
    <scope>FUNCTION</scope>
    <scope>CATALYTIC ACTIVITY</scope>
    <scope>DISRUPTION PHENOTYPE</scope>
    <scope>MUTAGENESIS OF 480-ASP-ASP-481</scope>
    <scope>BIOPHYSICOCHEMICAL PROPERTIES</scope>
</reference>
<name>PRRP3_ARATH</name>
<feature type="chain" id="PRO_0000420274" description="Proteinaceous RNase P 3">
    <location>
        <begin position="1"/>
        <end position="576"/>
    </location>
</feature>
<feature type="repeat" description="PPR 1">
    <location>
        <begin position="88"/>
        <end position="123"/>
    </location>
</feature>
<feature type="repeat" description="PPR 2">
    <location>
        <begin position="129"/>
        <end position="166"/>
    </location>
</feature>
<feature type="repeat" description="PPR 3">
    <location>
        <begin position="167"/>
        <end position="201"/>
    </location>
</feature>
<feature type="repeat" description="PPR 4">
    <location>
        <begin position="204"/>
        <end position="238"/>
    </location>
</feature>
<feature type="domain" description="PRORP">
    <location>
        <begin position="335"/>
        <end position="570"/>
    </location>
</feature>
<feature type="region of interest" description="Disordered" evidence="2">
    <location>
        <begin position="65"/>
        <end position="88"/>
    </location>
</feature>
<feature type="compositionally biased region" description="Basic and acidic residues" evidence="2">
    <location>
        <begin position="65"/>
        <end position="75"/>
    </location>
</feature>
<feature type="binding site" evidence="1">
    <location>
        <position position="340"/>
    </location>
    <ligand>
        <name>Zn(2+)</name>
        <dbReference type="ChEBI" id="CHEBI:29105"/>
    </ligand>
</feature>
<feature type="binding site" evidence="1">
    <location>
        <position position="343"/>
    </location>
    <ligand>
        <name>Zn(2+)</name>
        <dbReference type="ChEBI" id="CHEBI:29105"/>
    </ligand>
</feature>
<feature type="binding site" evidence="1">
    <location>
        <position position="402"/>
    </location>
    <ligand>
        <name>Mn(2+)</name>
        <dbReference type="ChEBI" id="CHEBI:29035"/>
        <label>1</label>
        <note>catalytic</note>
    </ligand>
</feature>
<feature type="binding site" evidence="1">
    <location>
        <position position="480"/>
    </location>
    <ligand>
        <name>Mn(2+)</name>
        <dbReference type="ChEBI" id="CHEBI:29035"/>
        <label>1</label>
        <note>catalytic</note>
    </ligand>
</feature>
<feature type="binding site" evidence="1">
    <location>
        <position position="481"/>
    </location>
    <ligand>
        <name>Mn(2+)</name>
        <dbReference type="ChEBI" id="CHEBI:29035"/>
        <label>2</label>
        <note>catalytic</note>
    </ligand>
</feature>
<feature type="binding site" evidence="1">
    <location>
        <position position="499"/>
    </location>
    <ligand>
        <name>Mn(2+)</name>
        <dbReference type="ChEBI" id="CHEBI:29035"/>
        <label>2</label>
        <note>catalytic</note>
    </ligand>
</feature>
<feature type="binding site" evidence="1">
    <location>
        <position position="553"/>
    </location>
    <ligand>
        <name>Zn(2+)</name>
        <dbReference type="ChEBI" id="CHEBI:29105"/>
    </ligand>
</feature>
<feature type="binding site" evidence="1">
    <location>
        <position position="570"/>
    </location>
    <ligand>
        <name>Zn(2+)</name>
        <dbReference type="ChEBI" id="CHEBI:29105"/>
    </ligand>
</feature>
<feature type="mutagenesis site" description="Loss of activity." evidence="4">
    <original>DD</original>
    <variation>AA</variation>
    <location>
        <begin position="480"/>
        <end position="481"/>
    </location>
</feature>
<feature type="sequence conflict" description="In Ref. 3; BAF02238." evidence="5" ref="3">
    <original>D</original>
    <variation>G</variation>
    <location>
        <position position="185"/>
    </location>
</feature>
<sequence>MKLKKPSLPSSLLCAVPPCLSQIRLLIPRRVRVSSSTFANAKLVTLRNHTVNLHIYYCSMAGTDNRRSRHDDESPKNPNKKKKGNRNPEKSLLINLHSCSKRKDLSAALALYDAAITSSDIRLNQQHFQSLLYLCSAFISDPSLQTVAIDRGFQIFDRMVSSGISPNESSVTAVARLAAAKGDGDYAFKLVKDLVAVGGVSVPRLRTYAPALLCFCDTLEAEKGYEVEDHMDASGIVLEEAEISALLKVSAATGRENKVYRYLQKLRECVGCVSEETSKAIEEWFYGVKASEVSDNGIGSDIELLRAAVLKNGGGWHGLGWVGEGKWIVKKGNVSSAGKCLSCDEHLACVDTNEVETEDFVNSLVTLAMERKAKMNSCEPMADFSEFQEWLEKHGDYEAILDGANIGLYQQNFADGGFSLPQLEAVVKELYNKSGSKKQPLILLHKKRVNALLENPNHRNLVEEWINNNVLYATPPGSNDDWYWLYAAAKLKCLLVTNDEMRDHIFELLSNSFFQKWKERHQVRFTFVKGCLKLEMPPPFSVVIQESEKGSWHVPITSQDKEESLRSWMCITRQSS</sequence>
<accession>F4JKB6</accession>
<accession>O49713</accession>
<accession>Q0WKW9</accession>
<accession>Q0WVS1</accession>
<organism>
    <name type="scientific">Arabidopsis thaliana</name>
    <name type="common">Mouse-ear cress</name>
    <dbReference type="NCBI Taxonomy" id="3702"/>
    <lineage>
        <taxon>Eukaryota</taxon>
        <taxon>Viridiplantae</taxon>
        <taxon>Streptophyta</taxon>
        <taxon>Embryophyta</taxon>
        <taxon>Tracheophyta</taxon>
        <taxon>Spermatophyta</taxon>
        <taxon>Magnoliopsida</taxon>
        <taxon>eudicotyledons</taxon>
        <taxon>Gunneridae</taxon>
        <taxon>Pentapetalae</taxon>
        <taxon>rosids</taxon>
        <taxon>malvids</taxon>
        <taxon>Brassicales</taxon>
        <taxon>Brassicaceae</taxon>
        <taxon>Camelineae</taxon>
        <taxon>Arabidopsis</taxon>
    </lineage>
</organism>
<keyword id="KW-0378">Hydrolase</keyword>
<keyword id="KW-0460">Magnesium</keyword>
<keyword id="KW-0464">Manganese</keyword>
<keyword id="KW-0479">Metal-binding</keyword>
<keyword id="KW-0540">Nuclease</keyword>
<keyword id="KW-0539">Nucleus</keyword>
<keyword id="KW-1185">Reference proteome</keyword>
<keyword id="KW-0677">Repeat</keyword>
<keyword id="KW-0819">tRNA processing</keyword>
<keyword id="KW-0862">Zinc</keyword>
<comment type="function">
    <text evidence="4">Endonuclease RNase P responsible for the 5' maturation of tRNA precursors. Also involved in the maturation of mRNA and small nucleolar RNA (snoRNA).</text>
</comment>
<comment type="catalytic activity">
    <reaction evidence="4">
        <text>Endonucleolytic cleavage of RNA, removing 5'-extranucleotides from tRNA precursor.</text>
        <dbReference type="EC" id="3.1.26.5"/>
    </reaction>
</comment>
<comment type="cofactor">
    <cofactor evidence="1">
        <name>Mg(2+)</name>
        <dbReference type="ChEBI" id="CHEBI:18420"/>
    </cofactor>
    <cofactor evidence="1">
        <name>Mn(2+)</name>
        <dbReference type="ChEBI" id="CHEBI:29035"/>
    </cofactor>
    <text evidence="1">Binds 2 Mg(2+) or Mg(2+) ions per subunit.</text>
</comment>
<comment type="biophysicochemical properties">
    <kinetics>
        <KM evidence="4">0.3 uM for tRNA(Gln) precursor</KM>
    </kinetics>
</comment>
<comment type="subcellular location">
    <subcellularLocation>
        <location evidence="3">Nucleus</location>
    </subcellularLocation>
</comment>
<comment type="disruption phenotype">
    <text evidence="4">No visible phenotype; due to the redundancy with PRORP2. Prorp2 and prorp3 double mutant is lethal.</text>
</comment>
<comment type="similarity">
    <text evidence="5">Belongs to the PPR family. P subfamily.</text>
</comment>
<comment type="sequence caution" evidence="5">
    <conflict type="erroneous initiation">
        <sequence resource="EMBL-CDS" id="BAE98777"/>
    </conflict>
    <text>Truncated N-terminus.</text>
</comment>
<comment type="sequence caution" evidence="5">
    <conflict type="miscellaneous discrepancy">
        <sequence resource="EMBL-CDS" id="BAF02238"/>
    </conflict>
    <text>Intron retention.</text>
</comment>
<comment type="sequence caution" evidence="5">
    <conflict type="erroneous gene model prediction">
        <sequence resource="EMBL-CDS" id="CAA17157"/>
    </conflict>
</comment>
<comment type="sequence caution" evidence="5">
    <conflict type="erroneous gene model prediction">
        <sequence resource="EMBL-CDS" id="CAB79145"/>
    </conflict>
</comment>
<protein>
    <recommendedName>
        <fullName>Proteinaceous RNase P 3</fullName>
        <ecNumber>3.1.26.5</ecNumber>
    </recommendedName>
</protein>
<proteinExistence type="evidence at protein level"/>
<dbReference type="EC" id="3.1.26.5"/>
<dbReference type="EMBL" id="AL021890">
    <property type="protein sequence ID" value="CAA17157.1"/>
    <property type="status" value="ALT_SEQ"/>
    <property type="molecule type" value="Genomic_DNA"/>
</dbReference>
<dbReference type="EMBL" id="AL161556">
    <property type="protein sequence ID" value="CAB79145.1"/>
    <property type="status" value="ALT_SEQ"/>
    <property type="molecule type" value="Genomic_DNA"/>
</dbReference>
<dbReference type="EMBL" id="CP002687">
    <property type="protein sequence ID" value="AEE84521.1"/>
    <property type="molecule type" value="Genomic_DNA"/>
</dbReference>
<dbReference type="EMBL" id="AK226669">
    <property type="protein sequence ID" value="BAE98777.1"/>
    <property type="status" value="ALT_INIT"/>
    <property type="molecule type" value="mRNA"/>
</dbReference>
<dbReference type="EMBL" id="AK230440">
    <property type="protein sequence ID" value="BAF02238.1"/>
    <property type="status" value="ALT_SEQ"/>
    <property type="molecule type" value="mRNA"/>
</dbReference>
<dbReference type="PIR" id="T05472">
    <property type="entry name" value="T05472"/>
</dbReference>
<dbReference type="RefSeq" id="NP_193921.2">
    <property type="nucleotide sequence ID" value="NM_118311.7"/>
</dbReference>
<dbReference type="SMR" id="F4JKB6"/>
<dbReference type="FunCoup" id="F4JKB6">
    <property type="interactions" value="2807"/>
</dbReference>
<dbReference type="STRING" id="3702.F4JKB6"/>
<dbReference type="iPTMnet" id="F4JKB6"/>
<dbReference type="PaxDb" id="3702-AT4G21900.1"/>
<dbReference type="ProteomicsDB" id="226477"/>
<dbReference type="EnsemblPlants" id="AT4G21900.1">
    <property type="protein sequence ID" value="AT4G21900.1"/>
    <property type="gene ID" value="AT4G21900"/>
</dbReference>
<dbReference type="GeneID" id="828279"/>
<dbReference type="Gramene" id="AT4G21900.1">
    <property type="protein sequence ID" value="AT4G21900.1"/>
    <property type="gene ID" value="AT4G21900"/>
</dbReference>
<dbReference type="KEGG" id="ath:AT4G21900"/>
<dbReference type="Araport" id="AT4G21900"/>
<dbReference type="TAIR" id="AT4G21900">
    <property type="gene designation" value="PRORP3"/>
</dbReference>
<dbReference type="eggNOG" id="KOG1347">
    <property type="taxonomic scope" value="Eukaryota"/>
</dbReference>
<dbReference type="HOGENOM" id="CLU_014066_2_0_1"/>
<dbReference type="InParanoid" id="F4JKB6"/>
<dbReference type="OMA" id="CLKLEMP"/>
<dbReference type="OrthoDB" id="46913at2759"/>
<dbReference type="BRENDA" id="3.1.26.5">
    <property type="organism ID" value="399"/>
</dbReference>
<dbReference type="SABIO-RK" id="F4JKB6"/>
<dbReference type="PRO" id="PR:F4JKB6"/>
<dbReference type="Proteomes" id="UP000006548">
    <property type="component" value="Chromosome 4"/>
</dbReference>
<dbReference type="ExpressionAtlas" id="F4JKB6">
    <property type="expression patterns" value="baseline and differential"/>
</dbReference>
<dbReference type="GO" id="GO:0005634">
    <property type="term" value="C:nucleus"/>
    <property type="evidence" value="ECO:0000314"/>
    <property type="project" value="TAIR"/>
</dbReference>
<dbReference type="GO" id="GO:0046872">
    <property type="term" value="F:metal ion binding"/>
    <property type="evidence" value="ECO:0007669"/>
    <property type="project" value="UniProtKB-KW"/>
</dbReference>
<dbReference type="GO" id="GO:0004526">
    <property type="term" value="F:ribonuclease P activity"/>
    <property type="evidence" value="ECO:0000314"/>
    <property type="project" value="UniProtKB"/>
</dbReference>
<dbReference type="GO" id="GO:0006397">
    <property type="term" value="P:mRNA processing"/>
    <property type="evidence" value="ECO:0000315"/>
    <property type="project" value="UniProtKB"/>
</dbReference>
<dbReference type="GO" id="GO:0043144">
    <property type="term" value="P:sno(s)RNA processing"/>
    <property type="evidence" value="ECO:0000315"/>
    <property type="project" value="UniProtKB"/>
</dbReference>
<dbReference type="GO" id="GO:0001682">
    <property type="term" value="P:tRNA 5'-leader removal"/>
    <property type="evidence" value="ECO:0000314"/>
    <property type="project" value="UniProtKB"/>
</dbReference>
<dbReference type="CDD" id="cd18671">
    <property type="entry name" value="PIN_PRORP-Zc3h12a-like"/>
    <property type="match status" value="1"/>
</dbReference>
<dbReference type="FunFam" id="1.25.40.10:FF:000631">
    <property type="entry name" value="Proteinaceous RNase P 2"/>
    <property type="match status" value="1"/>
</dbReference>
<dbReference type="FunFam" id="3.40.50.11980:FF:000002">
    <property type="entry name" value="Proteinaceous RNase P 2"/>
    <property type="match status" value="1"/>
</dbReference>
<dbReference type="Gene3D" id="3.40.50.11980">
    <property type="match status" value="1"/>
</dbReference>
<dbReference type="Gene3D" id="1.25.40.10">
    <property type="entry name" value="Tetratricopeptide repeat domain"/>
    <property type="match status" value="1"/>
</dbReference>
<dbReference type="InterPro" id="IPR033443">
    <property type="entry name" value="PROP1-like_PPR_dom"/>
</dbReference>
<dbReference type="InterPro" id="IPR031595">
    <property type="entry name" value="PRORP_C"/>
</dbReference>
<dbReference type="InterPro" id="IPR011990">
    <property type="entry name" value="TPR-like_helical_dom_sf"/>
</dbReference>
<dbReference type="PANTHER" id="PTHR13547">
    <property type="match status" value="1"/>
</dbReference>
<dbReference type="PANTHER" id="PTHR13547:SF20">
    <property type="entry name" value="PROTEINACEOUS RNASE P 3"/>
    <property type="match status" value="1"/>
</dbReference>
<dbReference type="Pfam" id="PF17177">
    <property type="entry name" value="PPR_long"/>
    <property type="match status" value="1"/>
</dbReference>
<dbReference type="Pfam" id="PF16953">
    <property type="entry name" value="PRORP"/>
    <property type="match status" value="1"/>
</dbReference>